<evidence type="ECO:0000255" key="1">
    <source>
        <dbReference type="HAMAP-Rule" id="MF_00321"/>
    </source>
</evidence>
<protein>
    <recommendedName>
        <fullName evidence="1">Probable GTP-binding protein EngB</fullName>
    </recommendedName>
</protein>
<gene>
    <name evidence="1" type="primary">engB</name>
    <name type="ordered locus">MG335</name>
</gene>
<dbReference type="EMBL" id="L43967">
    <property type="protein sequence ID" value="AAC71558.1"/>
    <property type="molecule type" value="Genomic_DNA"/>
</dbReference>
<dbReference type="PIR" id="A64237">
    <property type="entry name" value="A64237"/>
</dbReference>
<dbReference type="RefSeq" id="WP_010869438.1">
    <property type="nucleotide sequence ID" value="NC_000908.2"/>
</dbReference>
<dbReference type="SMR" id="P47577"/>
<dbReference type="FunCoup" id="P47577">
    <property type="interactions" value="144"/>
</dbReference>
<dbReference type="STRING" id="243273.MG_335"/>
<dbReference type="GeneID" id="88282508"/>
<dbReference type="KEGG" id="mge:MG_335"/>
<dbReference type="eggNOG" id="COG0218">
    <property type="taxonomic scope" value="Bacteria"/>
</dbReference>
<dbReference type="HOGENOM" id="CLU_033732_3_2_14"/>
<dbReference type="InParanoid" id="P47577"/>
<dbReference type="OrthoDB" id="9804921at2"/>
<dbReference type="BioCyc" id="MGEN243273:G1GJ2-417-MONOMER"/>
<dbReference type="Proteomes" id="UP000000807">
    <property type="component" value="Chromosome"/>
</dbReference>
<dbReference type="GO" id="GO:0005829">
    <property type="term" value="C:cytosol"/>
    <property type="evidence" value="ECO:0000318"/>
    <property type="project" value="GO_Central"/>
</dbReference>
<dbReference type="GO" id="GO:0005525">
    <property type="term" value="F:GTP binding"/>
    <property type="evidence" value="ECO:0007669"/>
    <property type="project" value="UniProtKB-UniRule"/>
</dbReference>
<dbReference type="GO" id="GO:0046872">
    <property type="term" value="F:metal ion binding"/>
    <property type="evidence" value="ECO:0007669"/>
    <property type="project" value="UniProtKB-KW"/>
</dbReference>
<dbReference type="GO" id="GO:0000917">
    <property type="term" value="P:division septum assembly"/>
    <property type="evidence" value="ECO:0007669"/>
    <property type="project" value="UniProtKB-KW"/>
</dbReference>
<dbReference type="CDD" id="cd01876">
    <property type="entry name" value="YihA_EngB"/>
    <property type="match status" value="1"/>
</dbReference>
<dbReference type="Gene3D" id="3.40.50.300">
    <property type="entry name" value="P-loop containing nucleotide triphosphate hydrolases"/>
    <property type="match status" value="1"/>
</dbReference>
<dbReference type="HAMAP" id="MF_00321">
    <property type="entry name" value="GTPase_EngB"/>
    <property type="match status" value="1"/>
</dbReference>
<dbReference type="InterPro" id="IPR030393">
    <property type="entry name" value="G_ENGB_dom"/>
</dbReference>
<dbReference type="InterPro" id="IPR006073">
    <property type="entry name" value="GTP-bd"/>
</dbReference>
<dbReference type="InterPro" id="IPR019987">
    <property type="entry name" value="GTP-bd_ribosome_bio_YsxC"/>
</dbReference>
<dbReference type="InterPro" id="IPR027417">
    <property type="entry name" value="P-loop_NTPase"/>
</dbReference>
<dbReference type="InterPro" id="IPR005225">
    <property type="entry name" value="Small_GTP-bd"/>
</dbReference>
<dbReference type="NCBIfam" id="TIGR03598">
    <property type="entry name" value="GTPase_YsxC"/>
    <property type="match status" value="1"/>
</dbReference>
<dbReference type="NCBIfam" id="TIGR00231">
    <property type="entry name" value="small_GTP"/>
    <property type="match status" value="1"/>
</dbReference>
<dbReference type="PANTHER" id="PTHR11649:SF13">
    <property type="entry name" value="ENGB-TYPE G DOMAIN-CONTAINING PROTEIN"/>
    <property type="match status" value="1"/>
</dbReference>
<dbReference type="PANTHER" id="PTHR11649">
    <property type="entry name" value="MSS1/TRME-RELATED GTP-BINDING PROTEIN"/>
    <property type="match status" value="1"/>
</dbReference>
<dbReference type="Pfam" id="PF01926">
    <property type="entry name" value="MMR_HSR1"/>
    <property type="match status" value="1"/>
</dbReference>
<dbReference type="SUPFAM" id="SSF52540">
    <property type="entry name" value="P-loop containing nucleoside triphosphate hydrolases"/>
    <property type="match status" value="1"/>
</dbReference>
<dbReference type="PROSITE" id="PS51706">
    <property type="entry name" value="G_ENGB"/>
    <property type="match status" value="1"/>
</dbReference>
<comment type="function">
    <text evidence="1">Necessary for normal cell division and for the maintenance of normal septation.</text>
</comment>
<comment type="cofactor">
    <cofactor evidence="1">
        <name>Mg(2+)</name>
        <dbReference type="ChEBI" id="CHEBI:18420"/>
    </cofactor>
</comment>
<comment type="similarity">
    <text evidence="1">Belongs to the TRAFAC class TrmE-Era-EngA-EngB-Septin-like GTPase superfamily. EngB GTPase family.</text>
</comment>
<proteinExistence type="inferred from homology"/>
<sequence length="191" mass="21835">MDAHFLKSASDLKDCPQDNIPEICFMGRSNVGKSSLINAFFKKKLAKTSATPGRTQLLNYFEYKDKRFVDLPGYGFAKINKNKKDFITNLLTQFLNFRSNLVGVVLIVDSGVVTVQDQEVVKIILQTGLNFLIVANKFDKLNQSERYFSLKNIANFLKVNFDKCVFASTKTHHNLALVHKKIFELFVEDER</sequence>
<name>ENGB_MYCGE</name>
<keyword id="KW-0131">Cell cycle</keyword>
<keyword id="KW-0132">Cell division</keyword>
<keyword id="KW-0342">GTP-binding</keyword>
<keyword id="KW-0460">Magnesium</keyword>
<keyword id="KW-0479">Metal-binding</keyword>
<keyword id="KW-0547">Nucleotide-binding</keyword>
<keyword id="KW-1185">Reference proteome</keyword>
<keyword id="KW-0717">Septation</keyword>
<organism>
    <name type="scientific">Mycoplasma genitalium (strain ATCC 33530 / DSM 19775 / NCTC 10195 / G37)</name>
    <name type="common">Mycoplasmoides genitalium</name>
    <dbReference type="NCBI Taxonomy" id="243273"/>
    <lineage>
        <taxon>Bacteria</taxon>
        <taxon>Bacillati</taxon>
        <taxon>Mycoplasmatota</taxon>
        <taxon>Mycoplasmoidales</taxon>
        <taxon>Mycoplasmoidaceae</taxon>
        <taxon>Mycoplasmoides</taxon>
    </lineage>
</organism>
<feature type="chain" id="PRO_0000157763" description="Probable GTP-binding protein EngB">
    <location>
        <begin position="1"/>
        <end position="191"/>
    </location>
</feature>
<feature type="domain" description="EngB-type G" evidence="1">
    <location>
        <begin position="19"/>
        <end position="188"/>
    </location>
</feature>
<feature type="binding site" evidence="1">
    <location>
        <begin position="27"/>
        <end position="34"/>
    </location>
    <ligand>
        <name>GTP</name>
        <dbReference type="ChEBI" id="CHEBI:37565"/>
    </ligand>
</feature>
<feature type="binding site" evidence="1">
    <location>
        <position position="34"/>
    </location>
    <ligand>
        <name>Mg(2+)</name>
        <dbReference type="ChEBI" id="CHEBI:18420"/>
    </ligand>
</feature>
<feature type="binding site" evidence="1">
    <location>
        <begin position="53"/>
        <end position="57"/>
    </location>
    <ligand>
        <name>GTP</name>
        <dbReference type="ChEBI" id="CHEBI:37565"/>
    </ligand>
</feature>
<feature type="binding site" evidence="1">
    <location>
        <position position="55"/>
    </location>
    <ligand>
        <name>Mg(2+)</name>
        <dbReference type="ChEBI" id="CHEBI:18420"/>
    </ligand>
</feature>
<feature type="binding site" evidence="1">
    <location>
        <begin position="70"/>
        <end position="73"/>
    </location>
    <ligand>
        <name>GTP</name>
        <dbReference type="ChEBI" id="CHEBI:37565"/>
    </ligand>
</feature>
<feature type="binding site" evidence="1">
    <location>
        <begin position="136"/>
        <end position="139"/>
    </location>
    <ligand>
        <name>GTP</name>
        <dbReference type="ChEBI" id="CHEBI:37565"/>
    </ligand>
</feature>
<feature type="binding site" evidence="1">
    <location>
        <begin position="167"/>
        <end position="169"/>
    </location>
    <ligand>
        <name>GTP</name>
        <dbReference type="ChEBI" id="CHEBI:37565"/>
    </ligand>
</feature>
<accession>P47577</accession>
<reference key="1">
    <citation type="journal article" date="1995" name="Science">
        <title>The minimal gene complement of Mycoplasma genitalium.</title>
        <authorList>
            <person name="Fraser C.M."/>
            <person name="Gocayne J.D."/>
            <person name="White O."/>
            <person name="Adams M.D."/>
            <person name="Clayton R.A."/>
            <person name="Fleischmann R.D."/>
            <person name="Bult C.J."/>
            <person name="Kerlavage A.R."/>
            <person name="Sutton G.G."/>
            <person name="Kelley J.M."/>
            <person name="Fritchman J.L."/>
            <person name="Weidman J.F."/>
            <person name="Small K.V."/>
            <person name="Sandusky M."/>
            <person name="Fuhrmann J.L."/>
            <person name="Nguyen D.T."/>
            <person name="Utterback T.R."/>
            <person name="Saudek D.M."/>
            <person name="Phillips C.A."/>
            <person name="Merrick J.M."/>
            <person name="Tomb J.-F."/>
            <person name="Dougherty B.A."/>
            <person name="Bott K.F."/>
            <person name="Hu P.-C."/>
            <person name="Lucier T.S."/>
            <person name="Peterson S.N."/>
            <person name="Smith H.O."/>
            <person name="Hutchison C.A. III"/>
            <person name="Venter J.C."/>
        </authorList>
    </citation>
    <scope>NUCLEOTIDE SEQUENCE [LARGE SCALE GENOMIC DNA]</scope>
    <source>
        <strain>ATCC 33530 / DSM 19775 / NCTC 10195 / G37</strain>
    </source>
</reference>